<feature type="signal peptide" evidence="4">
    <location>
        <begin position="1"/>
        <end position="33"/>
    </location>
</feature>
<feature type="chain" id="PRO_0000380726" description="Somatic embryogenesis receptor kinase 4">
    <location>
        <begin position="34"/>
        <end position="620"/>
    </location>
</feature>
<feature type="topological domain" description="Extracellular" evidence="4">
    <location>
        <begin position="34"/>
        <end position="234"/>
    </location>
</feature>
<feature type="transmembrane region" description="Helical" evidence="4">
    <location>
        <begin position="235"/>
        <end position="255"/>
    </location>
</feature>
<feature type="topological domain" description="Cytoplasmic" evidence="4">
    <location>
        <begin position="256"/>
        <end position="620"/>
    </location>
</feature>
<feature type="repeat" description="LRR 1">
    <location>
        <begin position="100"/>
        <end position="122"/>
    </location>
</feature>
<feature type="repeat" description="LRR 2">
    <location>
        <begin position="124"/>
        <end position="146"/>
    </location>
</feature>
<feature type="repeat" description="LRR 3">
    <location>
        <begin position="148"/>
        <end position="170"/>
    </location>
</feature>
<feature type="repeat" description="LRR 4">
    <location>
        <begin position="171"/>
        <end position="193"/>
    </location>
</feature>
<feature type="repeat" description="LRR 5">
    <location>
        <begin position="194"/>
        <end position="215"/>
    </location>
</feature>
<feature type="domain" description="Protein kinase" evidence="5">
    <location>
        <begin position="294"/>
        <end position="591"/>
    </location>
</feature>
<feature type="region of interest" description="Disordered" evidence="7">
    <location>
        <begin position="205"/>
        <end position="227"/>
    </location>
</feature>
<feature type="compositionally biased region" description="Pro residues" evidence="7">
    <location>
        <begin position="209"/>
        <end position="224"/>
    </location>
</feature>
<feature type="active site" description="Proton acceptor" evidence="5 6">
    <location>
        <position position="421"/>
    </location>
</feature>
<feature type="binding site" evidence="5">
    <location>
        <begin position="300"/>
        <end position="308"/>
    </location>
    <ligand>
        <name>ATP</name>
        <dbReference type="ChEBI" id="CHEBI:30616"/>
    </ligand>
</feature>
<feature type="binding site" evidence="5">
    <location>
        <position position="322"/>
    </location>
    <ligand>
        <name>ATP</name>
        <dbReference type="ChEBI" id="CHEBI:30616"/>
    </ligand>
</feature>
<feature type="modified residue" description="Phosphothreonine" evidence="3">
    <location>
        <position position="291"/>
    </location>
</feature>
<feature type="modified residue" description="Phosphoserine" evidence="10">
    <location>
        <position position="295"/>
    </location>
</feature>
<feature type="modified residue" description="Phosphoserine" evidence="1">
    <location>
        <position position="375"/>
    </location>
</feature>
<feature type="modified residue" description="Phosphoserine" evidence="3">
    <location>
        <position position="378"/>
    </location>
</feature>
<feature type="modified residue" description="Phosphothreonine" evidence="2">
    <location>
        <position position="454"/>
    </location>
</feature>
<feature type="modified residue" description="Phosphothreonine" evidence="2">
    <location>
        <position position="455"/>
    </location>
</feature>
<feature type="modified residue" description="Phosphothreonine" evidence="2">
    <location>
        <position position="460"/>
    </location>
</feature>
<feature type="modified residue" description="Phosphotyrosine" evidence="1">
    <location>
        <position position="468"/>
    </location>
</feature>
<feature type="modified residue" description="Phosphoserine" evidence="1">
    <location>
        <position position="470"/>
    </location>
</feature>
<feature type="modified residue" description="Phosphothreonine" evidence="1">
    <location>
        <position position="471"/>
    </location>
</feature>
<feature type="modified residue" description="Phosphoserine" evidence="1">
    <location>
        <position position="475"/>
    </location>
</feature>
<feature type="modified residue" description="Phosphothreonine" evidence="1">
    <location>
        <position position="551"/>
    </location>
</feature>
<feature type="glycosylation site" description="N-linked (GlcNAc...) asparagine" evidence="4">
    <location>
        <position position="110"/>
    </location>
</feature>
<feature type="glycosylation site" description="N-linked (GlcNAc...) asparagine" evidence="4">
    <location>
        <position position="156"/>
    </location>
</feature>
<feature type="glycosylation site" description="N-linked (GlcNAc...) asparagine" evidence="4">
    <location>
        <position position="189"/>
    </location>
</feature>
<feature type="glycosylation site" description="N-linked (GlcNAc...) asparagine" evidence="4">
    <location>
        <position position="202"/>
    </location>
</feature>
<accession>Q9SKG5</accession>
<accession>Q0WW00</accession>
<accession>Q93ZV3</accession>
<gene>
    <name evidence="18" type="primary">SERK4</name>
    <name evidence="16" type="synonym">BKK1</name>
    <name evidence="20" type="ordered locus">At2g13790</name>
    <name evidence="21" type="ORF">F13J11.14</name>
</gene>
<dbReference type="EC" id="2.7.10.1" evidence="6 10 11"/>
<dbReference type="EC" id="2.7.11.1" evidence="10 11"/>
<dbReference type="EMBL" id="FJ708691">
    <property type="protein sequence ID" value="ACN59286.1"/>
    <property type="molecule type" value="mRNA"/>
</dbReference>
<dbReference type="EMBL" id="AC006436">
    <property type="protein sequence ID" value="AAD28318.1"/>
    <property type="status" value="ALT_SEQ"/>
    <property type="molecule type" value="Genomic_DNA"/>
</dbReference>
<dbReference type="EMBL" id="CP002685">
    <property type="protein sequence ID" value="AEC06259.1"/>
    <property type="molecule type" value="Genomic_DNA"/>
</dbReference>
<dbReference type="EMBL" id="AY056243">
    <property type="protein sequence ID" value="AAL07092.1"/>
    <property type="molecule type" value="mRNA"/>
</dbReference>
<dbReference type="EMBL" id="AK226573">
    <property type="protein sequence ID" value="BAE98698.1"/>
    <property type="status" value="ALT_SEQ"/>
    <property type="molecule type" value="mRNA"/>
</dbReference>
<dbReference type="PIR" id="G84510">
    <property type="entry name" value="G84510"/>
</dbReference>
<dbReference type="RefSeq" id="NP_178999.2">
    <property type="nucleotide sequence ID" value="NM_126955.5"/>
</dbReference>
<dbReference type="SMR" id="Q9SKG5"/>
<dbReference type="BioGRID" id="1223">
    <property type="interactions" value="14"/>
</dbReference>
<dbReference type="FunCoup" id="Q9SKG5">
    <property type="interactions" value="209"/>
</dbReference>
<dbReference type="IntAct" id="Q9SKG5">
    <property type="interactions" value="28"/>
</dbReference>
<dbReference type="STRING" id="3702.Q9SKG5"/>
<dbReference type="GlyCosmos" id="Q9SKG5">
    <property type="glycosylation" value="4 sites, No reported glycans"/>
</dbReference>
<dbReference type="GlyGen" id="Q9SKG5">
    <property type="glycosylation" value="5 sites"/>
</dbReference>
<dbReference type="iPTMnet" id="Q9SKG5"/>
<dbReference type="PaxDb" id="3702-AT2G13790.1"/>
<dbReference type="ProteomicsDB" id="234542"/>
<dbReference type="EnsemblPlants" id="AT2G13790.1">
    <property type="protein sequence ID" value="AT2G13790.1"/>
    <property type="gene ID" value="AT2G13790"/>
</dbReference>
<dbReference type="GeneID" id="815862"/>
<dbReference type="Gramene" id="AT2G13790.1">
    <property type="protein sequence ID" value="AT2G13790.1"/>
    <property type="gene ID" value="AT2G13790"/>
</dbReference>
<dbReference type="KEGG" id="ath:AT2G13790"/>
<dbReference type="Araport" id="AT2G13790"/>
<dbReference type="TAIR" id="AT2G13790">
    <property type="gene designation" value="SERK4"/>
</dbReference>
<dbReference type="eggNOG" id="KOG1187">
    <property type="taxonomic scope" value="Eukaryota"/>
</dbReference>
<dbReference type="HOGENOM" id="CLU_000288_92_7_1"/>
<dbReference type="InParanoid" id="Q9SKG5"/>
<dbReference type="OMA" id="IAFAWWI"/>
<dbReference type="PhylomeDB" id="Q9SKG5"/>
<dbReference type="PRO" id="PR:Q9SKG5"/>
<dbReference type="Proteomes" id="UP000006548">
    <property type="component" value="Chromosome 2"/>
</dbReference>
<dbReference type="ExpressionAtlas" id="Q9SKG5">
    <property type="expression patterns" value="baseline and differential"/>
</dbReference>
<dbReference type="GO" id="GO:0005739">
    <property type="term" value="C:mitochondrion"/>
    <property type="evidence" value="ECO:0007005"/>
    <property type="project" value="TAIR"/>
</dbReference>
<dbReference type="GO" id="GO:0005886">
    <property type="term" value="C:plasma membrane"/>
    <property type="evidence" value="ECO:0000314"/>
    <property type="project" value="UniProtKB"/>
</dbReference>
<dbReference type="GO" id="GO:0005524">
    <property type="term" value="F:ATP binding"/>
    <property type="evidence" value="ECO:0007669"/>
    <property type="project" value="UniProtKB-KW"/>
</dbReference>
<dbReference type="GO" id="GO:0106310">
    <property type="term" value="F:protein serine kinase activity"/>
    <property type="evidence" value="ECO:0007669"/>
    <property type="project" value="RHEA"/>
</dbReference>
<dbReference type="GO" id="GO:0033612">
    <property type="term" value="F:receptor serine/threonine kinase binding"/>
    <property type="evidence" value="ECO:0000353"/>
    <property type="project" value="UniProtKB"/>
</dbReference>
<dbReference type="GO" id="GO:0005102">
    <property type="term" value="F:signaling receptor binding"/>
    <property type="evidence" value="ECO:0000353"/>
    <property type="project" value="UniProtKB"/>
</dbReference>
<dbReference type="GO" id="GO:0004675">
    <property type="term" value="F:transmembrane receptor protein serine/threonine kinase activity"/>
    <property type="evidence" value="ECO:0000250"/>
    <property type="project" value="TAIR"/>
</dbReference>
<dbReference type="GO" id="GO:0004714">
    <property type="term" value="F:transmembrane receptor protein tyrosine kinase activity"/>
    <property type="evidence" value="ECO:0007669"/>
    <property type="project" value="UniProtKB-EC"/>
</dbReference>
<dbReference type="GO" id="GO:0009742">
    <property type="term" value="P:brassinosteroid mediated signaling pathway"/>
    <property type="evidence" value="ECO:0000316"/>
    <property type="project" value="TAIR"/>
</dbReference>
<dbReference type="GO" id="GO:0008219">
    <property type="term" value="P:cell death"/>
    <property type="evidence" value="ECO:0000316"/>
    <property type="project" value="TAIR"/>
</dbReference>
<dbReference type="GO" id="GO:0071456">
    <property type="term" value="P:cellular response to hypoxia"/>
    <property type="evidence" value="ECO:0007007"/>
    <property type="project" value="TAIR"/>
</dbReference>
<dbReference type="GO" id="GO:0010150">
    <property type="term" value="P:leaf senescence"/>
    <property type="evidence" value="ECO:0000316"/>
    <property type="project" value="TAIR"/>
</dbReference>
<dbReference type="GO" id="GO:0006468">
    <property type="term" value="P:protein phosphorylation"/>
    <property type="evidence" value="ECO:0000250"/>
    <property type="project" value="TAIR"/>
</dbReference>
<dbReference type="GO" id="GO:0090351">
    <property type="term" value="P:seedling development"/>
    <property type="evidence" value="ECO:0000315"/>
    <property type="project" value="UniProtKB"/>
</dbReference>
<dbReference type="FunFam" id="3.30.200.20:FF:000015">
    <property type="entry name" value="Somatic embryogenesis receptor kinase 1"/>
    <property type="match status" value="1"/>
</dbReference>
<dbReference type="FunFam" id="3.80.10.10:FF:000024">
    <property type="entry name" value="Somatic embryogenesis receptor kinase 1"/>
    <property type="match status" value="1"/>
</dbReference>
<dbReference type="FunFam" id="1.10.510.10:FF:000016">
    <property type="entry name" value="Somatic embryogenesis receptor-like kinase 1"/>
    <property type="match status" value="1"/>
</dbReference>
<dbReference type="Gene3D" id="3.30.200.20">
    <property type="entry name" value="Phosphorylase Kinase, domain 1"/>
    <property type="match status" value="1"/>
</dbReference>
<dbReference type="Gene3D" id="3.80.10.10">
    <property type="entry name" value="Ribonuclease Inhibitor"/>
    <property type="match status" value="1"/>
</dbReference>
<dbReference type="Gene3D" id="1.10.510.10">
    <property type="entry name" value="Transferase(Phosphotransferase) domain 1"/>
    <property type="match status" value="1"/>
</dbReference>
<dbReference type="InterPro" id="IPR011009">
    <property type="entry name" value="Kinase-like_dom_sf"/>
</dbReference>
<dbReference type="InterPro" id="IPR001611">
    <property type="entry name" value="Leu-rich_rpt"/>
</dbReference>
<dbReference type="InterPro" id="IPR032675">
    <property type="entry name" value="LRR_dom_sf"/>
</dbReference>
<dbReference type="InterPro" id="IPR013210">
    <property type="entry name" value="LRR_N_plant-typ"/>
</dbReference>
<dbReference type="InterPro" id="IPR055414">
    <property type="entry name" value="LRR_R13L4/SHOC2-like"/>
</dbReference>
<dbReference type="InterPro" id="IPR000719">
    <property type="entry name" value="Prot_kinase_dom"/>
</dbReference>
<dbReference type="InterPro" id="IPR017441">
    <property type="entry name" value="Protein_kinase_ATP_BS"/>
</dbReference>
<dbReference type="InterPro" id="IPR001245">
    <property type="entry name" value="Ser-Thr/Tyr_kinase_cat_dom"/>
</dbReference>
<dbReference type="InterPro" id="IPR008271">
    <property type="entry name" value="Ser/Thr_kinase_AS"/>
</dbReference>
<dbReference type="PANTHER" id="PTHR47988">
    <property type="entry name" value="SOMATIC EMBRYOGENESIS RECEPTOR KINASE 1"/>
    <property type="match status" value="1"/>
</dbReference>
<dbReference type="Pfam" id="PF00560">
    <property type="entry name" value="LRR_1"/>
    <property type="match status" value="1"/>
</dbReference>
<dbReference type="Pfam" id="PF23598">
    <property type="entry name" value="LRR_14"/>
    <property type="match status" value="1"/>
</dbReference>
<dbReference type="Pfam" id="PF08263">
    <property type="entry name" value="LRRNT_2"/>
    <property type="match status" value="1"/>
</dbReference>
<dbReference type="Pfam" id="PF07714">
    <property type="entry name" value="PK_Tyr_Ser-Thr"/>
    <property type="match status" value="1"/>
</dbReference>
<dbReference type="SMART" id="SM00220">
    <property type="entry name" value="S_TKc"/>
    <property type="match status" value="1"/>
</dbReference>
<dbReference type="SUPFAM" id="SSF52058">
    <property type="entry name" value="L domain-like"/>
    <property type="match status" value="1"/>
</dbReference>
<dbReference type="SUPFAM" id="SSF56112">
    <property type="entry name" value="Protein kinase-like (PK-like)"/>
    <property type="match status" value="1"/>
</dbReference>
<dbReference type="PROSITE" id="PS00107">
    <property type="entry name" value="PROTEIN_KINASE_ATP"/>
    <property type="match status" value="1"/>
</dbReference>
<dbReference type="PROSITE" id="PS50011">
    <property type="entry name" value="PROTEIN_KINASE_DOM"/>
    <property type="match status" value="1"/>
</dbReference>
<dbReference type="PROSITE" id="PS00108">
    <property type="entry name" value="PROTEIN_KINASE_ST"/>
    <property type="match status" value="1"/>
</dbReference>
<proteinExistence type="evidence at protein level"/>
<organism>
    <name type="scientific">Arabidopsis thaliana</name>
    <name type="common">Mouse-ear cress</name>
    <dbReference type="NCBI Taxonomy" id="3702"/>
    <lineage>
        <taxon>Eukaryota</taxon>
        <taxon>Viridiplantae</taxon>
        <taxon>Streptophyta</taxon>
        <taxon>Embryophyta</taxon>
        <taxon>Tracheophyta</taxon>
        <taxon>Spermatophyta</taxon>
        <taxon>Magnoliopsida</taxon>
        <taxon>eudicotyledons</taxon>
        <taxon>Gunneridae</taxon>
        <taxon>Pentapetalae</taxon>
        <taxon>rosids</taxon>
        <taxon>malvids</taxon>
        <taxon>Brassicales</taxon>
        <taxon>Brassicaceae</taxon>
        <taxon>Camelineae</taxon>
        <taxon>Arabidopsis</taxon>
    </lineage>
</organism>
<sequence>MTSSKMEQRSLLCFLYLLLLFNFTLRVAGNAEGDALTQLKNSLSSGDPANNVLQSWDATLVTPCTWFHVTCNPENKVTRVDLGNAKLSGKLVPELGQLLNLQYLELYSNNITGEIPEELGDLVELVSLDLYANSISGPIPSSLGKLGKLRFLRLNNNSLSGEIPMTLTSVQLQVLDISNNRLSGDIPVNGSFSLFTPISFANNSLTDLPEPPPTSTSPTPPPPSGGQMTAAIAGGVAAGAALLFAVPAIAFAWWLRRKPQDHFFDVPAEEDPEVHLGQLKRFTLRELLVATDNFSNKNVLGRGGFGKVYKGRLADGNLVAVKRLKEERTKGGELQFQTEVEMISMAVHRNLLRLRGFCMTPTERLLVYPYMANGSVASCLRERPEGNPALDWPKRKHIALGSARGLAYLHDHCDQKIIHRDVKAANILLDEEFEAVVGDFGLAKLMNYNDSHVTTAVRGTIGHIAPEYLSTGKSSEKTDVFGYGVMLLELITGQKAFDLARLANDDDIMLLDWVKEVLKEKKLESLVDAELEGKYVETEVEQLIQMALLCTQSSAMERPKMSEVVRMLEGDGLAERWEEWQKEEMPIHDFNYQAYPHAGTDWLIPYSNSLIENDYPSGPR</sequence>
<keyword id="KW-0067">ATP-binding</keyword>
<keyword id="KW-1003">Cell membrane</keyword>
<keyword id="KW-0325">Glycoprotein</keyword>
<keyword id="KW-0418">Kinase</keyword>
<keyword id="KW-0433">Leucine-rich repeat</keyword>
<keyword id="KW-0472">Membrane</keyword>
<keyword id="KW-0547">Nucleotide-binding</keyword>
<keyword id="KW-0597">Phosphoprotein</keyword>
<keyword id="KW-0675">Receptor</keyword>
<keyword id="KW-1185">Reference proteome</keyword>
<keyword id="KW-0677">Repeat</keyword>
<keyword id="KW-0723">Serine/threonine-protein kinase</keyword>
<keyword id="KW-0732">Signal</keyword>
<keyword id="KW-0808">Transferase</keyword>
<keyword id="KW-0812">Transmembrane</keyword>
<keyword id="KW-1133">Transmembrane helix</keyword>
<keyword id="KW-0829">Tyrosine-protein kinase</keyword>
<reference key="1">
    <citation type="journal article" date="2010" name="BMC Genomics">
        <title>Genome-wide cloning and sequence analysis of leucine-rich repeat receptor-like protein kinase genes in Arabidopsis thaliana.</title>
        <authorList>
            <person name="Gou X."/>
            <person name="He K."/>
            <person name="Yang H."/>
            <person name="Yuan T."/>
            <person name="Lin H."/>
            <person name="Clouse S.D."/>
            <person name="Li J."/>
        </authorList>
    </citation>
    <scope>NUCLEOTIDE SEQUENCE [MRNA]</scope>
    <source>
        <strain>cv. Columbia</strain>
    </source>
</reference>
<reference key="2">
    <citation type="journal article" date="1999" name="Nature">
        <title>Sequence and analysis of chromosome 2 of the plant Arabidopsis thaliana.</title>
        <authorList>
            <person name="Lin X."/>
            <person name="Kaul S."/>
            <person name="Rounsley S.D."/>
            <person name="Shea T.P."/>
            <person name="Benito M.-I."/>
            <person name="Town C.D."/>
            <person name="Fujii C.Y."/>
            <person name="Mason T.M."/>
            <person name="Bowman C.L."/>
            <person name="Barnstead M.E."/>
            <person name="Feldblyum T.V."/>
            <person name="Buell C.R."/>
            <person name="Ketchum K.A."/>
            <person name="Lee J.J."/>
            <person name="Ronning C.M."/>
            <person name="Koo H.L."/>
            <person name="Moffat K.S."/>
            <person name="Cronin L.A."/>
            <person name="Shen M."/>
            <person name="Pai G."/>
            <person name="Van Aken S."/>
            <person name="Umayam L."/>
            <person name="Tallon L.J."/>
            <person name="Gill J.E."/>
            <person name="Adams M.D."/>
            <person name="Carrera A.J."/>
            <person name="Creasy T.H."/>
            <person name="Goodman H.M."/>
            <person name="Somerville C.R."/>
            <person name="Copenhaver G.P."/>
            <person name="Preuss D."/>
            <person name="Nierman W.C."/>
            <person name="White O."/>
            <person name="Eisen J.A."/>
            <person name="Salzberg S.L."/>
            <person name="Fraser C.M."/>
            <person name="Venter J.C."/>
        </authorList>
    </citation>
    <scope>NUCLEOTIDE SEQUENCE [LARGE SCALE GENOMIC DNA]</scope>
    <source>
        <strain>cv. Columbia</strain>
    </source>
</reference>
<reference key="3">
    <citation type="journal article" date="2017" name="Plant J.">
        <title>Araport11: a complete reannotation of the Arabidopsis thaliana reference genome.</title>
        <authorList>
            <person name="Cheng C.Y."/>
            <person name="Krishnakumar V."/>
            <person name="Chan A.P."/>
            <person name="Thibaud-Nissen F."/>
            <person name="Schobel S."/>
            <person name="Town C.D."/>
        </authorList>
    </citation>
    <scope>GENOME REANNOTATION</scope>
    <source>
        <strain>cv. Columbia</strain>
    </source>
</reference>
<reference key="4">
    <citation type="journal article" date="2003" name="Science">
        <title>Empirical analysis of transcriptional activity in the Arabidopsis genome.</title>
        <authorList>
            <person name="Yamada K."/>
            <person name="Lim J."/>
            <person name="Dale J.M."/>
            <person name="Chen H."/>
            <person name="Shinn P."/>
            <person name="Palm C.J."/>
            <person name="Southwick A.M."/>
            <person name="Wu H.C."/>
            <person name="Kim C.J."/>
            <person name="Nguyen M."/>
            <person name="Pham P.K."/>
            <person name="Cheuk R.F."/>
            <person name="Karlin-Newmann G."/>
            <person name="Liu S.X."/>
            <person name="Lam B."/>
            <person name="Sakano H."/>
            <person name="Wu T."/>
            <person name="Yu G."/>
            <person name="Miranda M."/>
            <person name="Quach H.L."/>
            <person name="Tripp M."/>
            <person name="Chang C.H."/>
            <person name="Lee J.M."/>
            <person name="Toriumi M.J."/>
            <person name="Chan M.M."/>
            <person name="Tang C.C."/>
            <person name="Onodera C.S."/>
            <person name="Deng J.M."/>
            <person name="Akiyama K."/>
            <person name="Ansari Y."/>
            <person name="Arakawa T."/>
            <person name="Banh J."/>
            <person name="Banno F."/>
            <person name="Bowser L."/>
            <person name="Brooks S.Y."/>
            <person name="Carninci P."/>
            <person name="Chao Q."/>
            <person name="Choy N."/>
            <person name="Enju A."/>
            <person name="Goldsmith A.D."/>
            <person name="Gurjal M."/>
            <person name="Hansen N.F."/>
            <person name="Hayashizaki Y."/>
            <person name="Johnson-Hopson C."/>
            <person name="Hsuan V.W."/>
            <person name="Iida K."/>
            <person name="Karnes M."/>
            <person name="Khan S."/>
            <person name="Koesema E."/>
            <person name="Ishida J."/>
            <person name="Jiang P.X."/>
            <person name="Jones T."/>
            <person name="Kawai J."/>
            <person name="Kamiya A."/>
            <person name="Meyers C."/>
            <person name="Nakajima M."/>
            <person name="Narusaka M."/>
            <person name="Seki M."/>
            <person name="Sakurai T."/>
            <person name="Satou M."/>
            <person name="Tamse R."/>
            <person name="Vaysberg M."/>
            <person name="Wallender E.K."/>
            <person name="Wong C."/>
            <person name="Yamamura Y."/>
            <person name="Yuan S."/>
            <person name="Shinozaki K."/>
            <person name="Davis R.W."/>
            <person name="Theologis A."/>
            <person name="Ecker J.R."/>
        </authorList>
    </citation>
    <scope>NUCLEOTIDE SEQUENCE [LARGE SCALE MRNA]</scope>
    <source>
        <strain>cv. Columbia</strain>
    </source>
</reference>
<reference key="5">
    <citation type="submission" date="2006-07" db="EMBL/GenBank/DDBJ databases">
        <title>Large-scale analysis of RIKEN Arabidopsis full-length (RAFL) cDNAs.</title>
        <authorList>
            <person name="Totoki Y."/>
            <person name="Seki M."/>
            <person name="Ishida J."/>
            <person name="Nakajima M."/>
            <person name="Enju A."/>
            <person name="Kamiya A."/>
            <person name="Narusaka M."/>
            <person name="Shin-i T."/>
            <person name="Nakagawa M."/>
            <person name="Sakamoto N."/>
            <person name="Oishi K."/>
            <person name="Kohara Y."/>
            <person name="Kobayashi M."/>
            <person name="Toyoda A."/>
            <person name="Sakaki Y."/>
            <person name="Sakurai T."/>
            <person name="Iida K."/>
            <person name="Akiyama K."/>
            <person name="Satou M."/>
            <person name="Toyoda T."/>
            <person name="Konagaya A."/>
            <person name="Carninci P."/>
            <person name="Kawai J."/>
            <person name="Hayashizaki Y."/>
            <person name="Shinozaki K."/>
        </authorList>
    </citation>
    <scope>NUCLEOTIDE SEQUENCE [LARGE SCALE MRNA]</scope>
    <source>
        <strain>cv. Columbia</strain>
    </source>
</reference>
<reference key="6">
    <citation type="journal article" date="2007" name="Curr. Biol.">
        <title>BAK1 and BKK1 regulate brassinosteroid-dependent growth and brassinosteroid-independent cell-death pathways.</title>
        <authorList>
            <person name="He K."/>
            <person name="Gou X."/>
            <person name="Yuan T."/>
            <person name="Lin H."/>
            <person name="Asami T."/>
            <person name="Yoshida S."/>
            <person name="Russell S.D."/>
            <person name="Li J."/>
        </authorList>
    </citation>
    <scope>FUNCTION</scope>
    <scope>DISRUPTION PHENOTYPE</scope>
</reference>
<reference key="7">
    <citation type="journal article" date="2008" name="Plant Physiol.">
        <title>Arabidopsis SOMATIC EMBRYOGENESIS RECEPTOR KINASE proteins serve brassinosteroid-dependent and -independent signaling pathways.</title>
        <authorList>
            <person name="Albrecht C."/>
            <person name="Russinova E."/>
            <person name="Kemmerling B."/>
            <person name="Kwaaitaal M."/>
            <person name="de Vries S.C."/>
        </authorList>
    </citation>
    <scope>FUNCTION</scope>
    <scope>DISRUPTION PHENOTYPE</scope>
</reference>
<reference key="8">
    <citation type="journal article" date="2009" name="Proc. Natl. Acad. Sci. U.S.A.">
        <title>Tyrosine phosphorylation of the BRI1 receptor kinase emerges as a component of brassinosteroid signaling in Arabidopsis.</title>
        <authorList>
            <person name="Oh M.-H."/>
            <person name="Wang X."/>
            <person name="Kota U."/>
            <person name="Goshe M.B."/>
            <person name="Clouse S.D."/>
            <person name="Huber S.C."/>
        </authorList>
    </citation>
    <scope>FUNCTION</scope>
    <scope>AUTOPHOSPHORYLATION</scope>
    <scope>CATALYTIC ACTIVITY</scope>
</reference>
<reference key="9">
    <citation type="journal article" date="2009" name="Proteomics">
        <title>Identification of in vitro phosphorylation sites in the Arabidopsis thaliana somatic embryogenesis receptor-like kinases.</title>
        <authorList>
            <person name="Karlova R."/>
            <person name="Boeren S."/>
            <person name="van Dongen W."/>
            <person name="Kwaaitaal M."/>
            <person name="Aker J."/>
            <person name="Vervoort J."/>
            <person name="de Vries S.C."/>
        </authorList>
    </citation>
    <scope>PHOSPHORYLATION AT SER-295</scope>
    <scope>CATALYTIC ACTIVITY</scope>
</reference>
<reference key="10">
    <citation type="journal article" date="2011" name="Plant Cell">
        <title>The Arabidopsis leucine-rich repeat receptor-like kinases BAK1/SERK3 and BKK1/SERK4 are required for innate immunity to hemibiotrophic and biotrophic pathogens.</title>
        <authorList>
            <person name="Roux M."/>
            <person name="Schwessinger B."/>
            <person name="Albrecht C."/>
            <person name="Chinchilla D."/>
            <person name="Jones A."/>
            <person name="Holton N."/>
            <person name="Malinovsky F.G."/>
            <person name="Tor M."/>
            <person name="de Vries S."/>
            <person name="Zipfel C."/>
        </authorList>
    </citation>
    <scope>INTERACTION WITH EFR AND FLS2</scope>
    <source>
        <strain>cv. Columbia</strain>
    </source>
</reference>
<reference key="11">
    <citation type="journal article" date="2013" name="Plant Cell Physiol.">
        <title>Identification of Arabidopsis BAK1-associating receptor-like kinase 1 (BARK1) and characterization of its gene expression and brassinosteroid-regulated root phenotypes.</title>
        <authorList>
            <person name="Kim M.H."/>
            <person name="Kim Y."/>
            <person name="Kim J.W."/>
            <person name="Lee H.S."/>
            <person name="Lee W.S."/>
            <person name="Kim S.K."/>
            <person name="Wang Z.Y."/>
            <person name="Kim S.H."/>
        </authorList>
    </citation>
    <scope>INTERACTION WITH TMK4/BARK1</scope>
</reference>
<reference key="12">
    <citation type="journal article" date="2015" name="Curr. Biol.">
        <title>Differential function of Arabidopsis SERK family receptor-like kinases in stomatal patterning.</title>
        <authorList>
            <person name="Meng X."/>
            <person name="Chen X."/>
            <person name="Mang H."/>
            <person name="Liu C."/>
            <person name="Yu X."/>
            <person name="Gao X."/>
            <person name="Torii K.U."/>
            <person name="He P."/>
            <person name="Shan L."/>
        </authorList>
    </citation>
    <scope>INTERACTION WITH ERECTA; ERL1 AND TMM</scope>
</reference>
<reference key="13">
    <citation type="journal article" date="2021" name="Nat. Commun.">
        <title>The Arabidopsis MIK2 receptor elicits immunity by sensing a conserved signature from phytocytokines and microbes.</title>
        <authorList>
            <person name="Hou S."/>
            <person name="Liu D."/>
            <person name="Huang S."/>
            <person name="Luo D."/>
            <person name="Liu Z."/>
            <person name="Xiang Q."/>
            <person name="Wang P."/>
            <person name="Mu R."/>
            <person name="Han Z."/>
            <person name="Chen S."/>
            <person name="Chai J."/>
            <person name="Shan L."/>
            <person name="He P."/>
        </authorList>
    </citation>
    <scope>FUNCTION</scope>
    <scope>DISRUPTION PHENOTYPE</scope>
    <scope>SUBUNIT</scope>
    <source>
        <strain>cv. Columbia</strain>
    </source>
</reference>
<protein>
    <recommendedName>
        <fullName evidence="18">Somatic embryogenesis receptor kinase 4</fullName>
        <shortName evidence="18">AtSERK4</shortName>
        <ecNumber evidence="6 10 11">2.7.10.1</ecNumber>
        <ecNumber evidence="10 11">2.7.11.1</ecNumber>
    </recommendedName>
    <alternativeName>
        <fullName evidence="16">Protein BAK1-like 1</fullName>
        <shortName evidence="16">AtBKK1</shortName>
    </alternativeName>
    <alternativeName>
        <fullName evidence="17">Somatic embryogenesis receptor-like kinase 2</fullName>
    </alternativeName>
</protein>
<comment type="function">
    <text evidence="8 9 11 15">Dual specificity kinase acting on both serine/threonine- and tyrosine-containing substrates. Positively regulates the BR-dependent plant growth pathway and negatively regulates the BR-independent cell-death pathway. Required during SCOOP small peptides (e.g. SCOOP10 and SCOOP12) perception and signaling; associates with MIK2 as a coreceptor upon MIK2 perception of SCOOP peptides, and relays the signaling through the activation of receptor-like cytosolic kinases (RLCKs) BIK1 and PBL1 (PubMed:34535661).</text>
</comment>
<comment type="catalytic activity">
    <reaction evidence="10 11">
        <text>L-seryl-[protein] + ATP = O-phospho-L-seryl-[protein] + ADP + H(+)</text>
        <dbReference type="Rhea" id="RHEA:17989"/>
        <dbReference type="Rhea" id="RHEA-COMP:9863"/>
        <dbReference type="Rhea" id="RHEA-COMP:11604"/>
        <dbReference type="ChEBI" id="CHEBI:15378"/>
        <dbReference type="ChEBI" id="CHEBI:29999"/>
        <dbReference type="ChEBI" id="CHEBI:30616"/>
        <dbReference type="ChEBI" id="CHEBI:83421"/>
        <dbReference type="ChEBI" id="CHEBI:456216"/>
        <dbReference type="EC" id="2.7.11.1"/>
    </reaction>
</comment>
<comment type="catalytic activity">
    <reaction evidence="10 11">
        <text>L-threonyl-[protein] + ATP = O-phospho-L-threonyl-[protein] + ADP + H(+)</text>
        <dbReference type="Rhea" id="RHEA:46608"/>
        <dbReference type="Rhea" id="RHEA-COMP:11060"/>
        <dbReference type="Rhea" id="RHEA-COMP:11605"/>
        <dbReference type="ChEBI" id="CHEBI:15378"/>
        <dbReference type="ChEBI" id="CHEBI:30013"/>
        <dbReference type="ChEBI" id="CHEBI:30616"/>
        <dbReference type="ChEBI" id="CHEBI:61977"/>
        <dbReference type="ChEBI" id="CHEBI:456216"/>
        <dbReference type="EC" id="2.7.11.1"/>
    </reaction>
</comment>
<comment type="catalytic activity">
    <reaction evidence="6 10 11">
        <text>L-tyrosyl-[protein] + ATP = O-phospho-L-tyrosyl-[protein] + ADP + H(+)</text>
        <dbReference type="Rhea" id="RHEA:10596"/>
        <dbReference type="Rhea" id="RHEA-COMP:10136"/>
        <dbReference type="Rhea" id="RHEA-COMP:20101"/>
        <dbReference type="ChEBI" id="CHEBI:15378"/>
        <dbReference type="ChEBI" id="CHEBI:30616"/>
        <dbReference type="ChEBI" id="CHEBI:46858"/>
        <dbReference type="ChEBI" id="CHEBI:61978"/>
        <dbReference type="ChEBI" id="CHEBI:456216"/>
        <dbReference type="EC" id="2.7.10.1"/>
    </reaction>
</comment>
<comment type="subunit">
    <text evidence="12 13 14 15">Interacts with the EF-Tu receptor EFR and FLS2 in a specific ligand-induced manner (PubMed:21693696). Interacts with TMK4/BARK1 (PubMed:23921992). Interacts with ERECTA in a EPF2-induced manner. Interacts with ERL1 in a EPF1-induced manner. Interacts with TMM (PubMed:26320950). Forms a complex with MIK2 in response to SCOOP12 perception (PubMed:34535661).</text>
</comment>
<comment type="interaction">
    <interactant intactId="EBI-6290483">
        <id>Q9SKG5</id>
    </interactant>
    <interactant intactId="EBI-20651225">
        <id>C0LGI5</id>
        <label>At1g69990</label>
    </interactant>
    <organismsDiffer>false</organismsDiffer>
    <experiments>4</experiments>
</comment>
<comment type="interaction">
    <interactant intactId="EBI-6290483">
        <id>Q9SKG5</id>
    </interactant>
    <interactant intactId="EBI-16902452">
        <id>Q8VYT3</id>
        <label>At4g30520</label>
    </interactant>
    <organismsDiffer>false</organismsDiffer>
    <experiments>2</experiments>
</comment>
<comment type="interaction">
    <interactant intactId="EBI-6290483">
        <id>Q9SKG5</id>
    </interactant>
    <interactant intactId="EBI-6298290">
        <id>Q9ASS4</id>
        <label>At5g48380</label>
    </interactant>
    <organismsDiffer>false</organismsDiffer>
    <experiments>2</experiments>
</comment>
<comment type="interaction">
    <interactant intactId="EBI-6290483">
        <id>Q9SKG5</id>
    </interactant>
    <interactant intactId="EBI-617138">
        <id>Q94F62</id>
        <label>BAK1</label>
    </interactant>
    <organismsDiffer>false</organismsDiffer>
    <experiments>4</experiments>
</comment>
<comment type="interaction">
    <interactant intactId="EBI-6290483">
        <id>Q9SKG5</id>
    </interactant>
    <interactant intactId="EBI-16940407">
        <id>Q42371</id>
        <label>ERECTA</label>
    </interactant>
    <organismsDiffer>false</organismsDiffer>
    <experiments>2</experiments>
</comment>
<comment type="interaction">
    <interactant intactId="EBI-6290483">
        <id>Q9SKG5</id>
    </interactant>
    <interactant intactId="EBI-16914248">
        <id>C0LGW6</id>
        <label>ERL1</label>
    </interactant>
    <organismsDiffer>false</organismsDiffer>
    <experiments>4</experiments>
</comment>
<comment type="interaction">
    <interactant intactId="EBI-6290483">
        <id>Q9SKG5</id>
    </interactant>
    <interactant intactId="EBI-16895926">
        <id>Q6XAT2</id>
        <label>ERL2</label>
    </interactant>
    <organismsDiffer>false</organismsDiffer>
    <experiments>3</experiments>
</comment>
<comment type="interaction">
    <interactant intactId="EBI-6290483">
        <id>Q9SKG5</id>
    </interactant>
    <interactant intactId="EBI-16924837">
        <id>Q9C8I6</id>
        <label>IOS1</label>
    </interactant>
    <organismsDiffer>false</organismsDiffer>
    <experiments>4</experiments>
</comment>
<comment type="interaction">
    <interactant intactId="EBI-6290483">
        <id>Q9SKG5</id>
    </interactant>
    <interactant intactId="EBI-20651739">
        <id>Q9ZVD4</id>
        <label>LRR-RLK</label>
    </interactant>
    <organismsDiffer>false</organismsDiffer>
    <experiments>2</experiments>
</comment>
<comment type="interaction">
    <interactant intactId="EBI-6290483">
        <id>Q9SKG5</id>
    </interactant>
    <interactant intactId="EBI-16146189">
        <id>Q9LFS4</id>
        <label>NIK1</label>
    </interactant>
    <organismsDiffer>false</organismsDiffer>
    <experiments>4</experiments>
</comment>
<comment type="interaction">
    <interactant intactId="EBI-6290483">
        <id>Q9SKG5</id>
    </interactant>
    <interactant intactId="EBI-1555537">
        <id>Q94AG2</id>
        <label>SERK1</label>
    </interactant>
    <organismsDiffer>false</organismsDiffer>
    <experiments>4</experiments>
</comment>
<comment type="interaction">
    <interactant intactId="EBI-6290483">
        <id>Q9SKG5</id>
    </interactant>
    <interactant intactId="EBI-16887868">
        <id>Q8LPS5</id>
        <label>SERK5</label>
    </interactant>
    <organismsDiffer>false</organismsDiffer>
    <experiments>4</experiments>
</comment>
<comment type="interaction">
    <interactant intactId="EBI-6290483">
        <id>Q9SKG5</id>
    </interactant>
    <interactant intactId="EBI-16964596">
        <id>Q9LUL4</id>
        <label>SRF7</label>
    </interactant>
    <organismsDiffer>false</organismsDiffer>
    <experiments>4</experiments>
</comment>
<comment type="interaction">
    <interactant intactId="EBI-6290483">
        <id>Q9SKG5</id>
    </interactant>
    <interactant intactId="EBI-17072125">
        <id>Q8RWZ1</id>
        <label>SUB</label>
    </interactant>
    <organismsDiffer>false</organismsDiffer>
    <experiments>4</experiments>
</comment>
<comment type="subcellular location">
    <subcellularLocation>
        <location evidence="19">Cell membrane</location>
        <topology evidence="19">Single-pass type I membrane protein</topology>
    </subcellularLocation>
</comment>
<comment type="PTM">
    <text evidence="10 11">Autophosphorylated on Thr and Tyr residues.</text>
</comment>
<comment type="disruption phenotype">
    <text evidence="8 9 15">No visible phenotype; due to the redundancy with BAK1. Compromised SCOOP10- and SCOOP12-induced root growth inhibition and reactive oxygen species (ROS) production in the double mutant bak1-5 serk4 (PubMed:34535661). Bak1 and bkk1 double mutants are seedling lethal.</text>
</comment>
<comment type="similarity">
    <text evidence="5">Belongs to the protein kinase superfamily. Ser/Thr protein kinase family.</text>
</comment>
<comment type="sequence caution" evidence="19">
    <conflict type="erroneous gene model prediction">
        <sequence resource="EMBL-CDS" id="AAD28318"/>
    </conflict>
</comment>
<comment type="sequence caution" evidence="19">
    <conflict type="miscellaneous discrepancy">
        <sequence resource="EMBL-CDS" id="BAE98698"/>
    </conflict>
    <text>Intron retention.</text>
</comment>
<name>SERK4_ARATH</name>
<evidence type="ECO:0000250" key="1">
    <source>
        <dbReference type="UniProtKB" id="Q94AG2"/>
    </source>
</evidence>
<evidence type="ECO:0000250" key="2">
    <source>
        <dbReference type="UniProtKB" id="Q94F62"/>
    </source>
</evidence>
<evidence type="ECO:0000250" key="3">
    <source>
        <dbReference type="UniProtKB" id="Q9LSI9"/>
    </source>
</evidence>
<evidence type="ECO:0000255" key="4"/>
<evidence type="ECO:0000255" key="5">
    <source>
        <dbReference type="PROSITE-ProRule" id="PRU00159"/>
    </source>
</evidence>
<evidence type="ECO:0000255" key="6">
    <source>
        <dbReference type="PROSITE-ProRule" id="PRU10027"/>
    </source>
</evidence>
<evidence type="ECO:0000256" key="7">
    <source>
        <dbReference type="SAM" id="MobiDB-lite"/>
    </source>
</evidence>
<evidence type="ECO:0000269" key="8">
    <source>
    </source>
</evidence>
<evidence type="ECO:0000269" key="9">
    <source>
    </source>
</evidence>
<evidence type="ECO:0000269" key="10">
    <source>
    </source>
</evidence>
<evidence type="ECO:0000269" key="11">
    <source>
    </source>
</evidence>
<evidence type="ECO:0000269" key="12">
    <source>
    </source>
</evidence>
<evidence type="ECO:0000269" key="13">
    <source>
    </source>
</evidence>
<evidence type="ECO:0000269" key="14">
    <source>
    </source>
</evidence>
<evidence type="ECO:0000269" key="15">
    <source>
    </source>
</evidence>
<evidence type="ECO:0000303" key="16">
    <source>
    </source>
</evidence>
<evidence type="ECO:0000303" key="17">
    <source>
    </source>
</evidence>
<evidence type="ECO:0000303" key="18">
    <source>
    </source>
</evidence>
<evidence type="ECO:0000305" key="19"/>
<evidence type="ECO:0000312" key="20">
    <source>
        <dbReference type="Araport" id="AT2G13790"/>
    </source>
</evidence>
<evidence type="ECO:0000312" key="21">
    <source>
        <dbReference type="EMBL" id="AAD28318.1"/>
    </source>
</evidence>